<sequence length="616" mass="68188">MSPNDAFISAPAKIETPVGPRNEGQPAWNKQRGSSMPVNRYMPFEVEVEDISLPDRTWPDKKITVAPQWCAVDLRDGNQALIDPMSPERKRRMFELLVQMGFKEIEVGFPSASQTDFDFVREIIEKGMIPDDVTIQVLVQAREHLIRRTFEACEGAKNVIVHFYNSTSILQRNVVFRMDKVQVKKLATDAAELIKTIAQDYPDTNWRWQYSPESFTGTEVEYAKEVVDAVVEVMDPTPENPMIINLPSTVEMITPNVYADSIEWMHRNLNRRDSIILSLHPHNDRGTGVGAAELGYMAGADRIEGCLFGNGERTGNVCLVTLALNMLTQGVDPQLDFTDIRQIRSTVEYCNQLRVPERHPYGGDLVFTAFSGSHQDAVNKGLDAMAAKVQPGASSTEVSWEQLRDTEWEVPYLPIDPKDVGRDYEAVIRVNSQSGKGGVAYIMKTDHGLQIPRSMQVEFSTVVQNVTDAEGGEVNSKAMWDIFATEYLERTAPVEQIALRVENAQTENEDASITAELIHNGKDVTVDGRGNGPLAAYANALEKLGIDVEIQEYNQHARTSGDDAEAAAYVLAEVNGRKVWGVGIAGSITYASLKAVTSAVNRALDVNHEAVLAGGV</sequence>
<name>LEU1_CORGL</name>
<dbReference type="EC" id="2.3.3.13" evidence="1"/>
<dbReference type="EMBL" id="X70959">
    <property type="protein sequence ID" value="CAA50295.1"/>
    <property type="status" value="ALT_INIT"/>
    <property type="molecule type" value="Genomic_DNA"/>
</dbReference>
<dbReference type="EMBL" id="BA000036">
    <property type="protein sequence ID" value="BAB97641.1"/>
    <property type="molecule type" value="Genomic_DNA"/>
</dbReference>
<dbReference type="EMBL" id="BX927148">
    <property type="protein sequence ID" value="CAF18819.1"/>
    <property type="molecule type" value="Genomic_DNA"/>
</dbReference>
<dbReference type="RefSeq" id="NP_599502.2">
    <property type="nucleotide sequence ID" value="NC_003450.3"/>
</dbReference>
<dbReference type="RefSeq" id="WP_015439406.1">
    <property type="nucleotide sequence ID" value="NC_006958.1"/>
</dbReference>
<dbReference type="SMR" id="P42455"/>
<dbReference type="STRING" id="196627.cg0303"/>
<dbReference type="GeneID" id="1021149"/>
<dbReference type="KEGG" id="cgb:cg0303"/>
<dbReference type="KEGG" id="cgl:Cgl0248"/>
<dbReference type="PATRIC" id="fig|196627.13.peg.253"/>
<dbReference type="eggNOG" id="COG0119">
    <property type="taxonomic scope" value="Bacteria"/>
</dbReference>
<dbReference type="HOGENOM" id="CLU_004588_3_2_11"/>
<dbReference type="OrthoDB" id="9803573at2"/>
<dbReference type="BioCyc" id="CORYNE:G18NG-9803-MONOMER"/>
<dbReference type="UniPathway" id="UPA00048">
    <property type="reaction ID" value="UER00070"/>
</dbReference>
<dbReference type="Proteomes" id="UP000000582">
    <property type="component" value="Chromosome"/>
</dbReference>
<dbReference type="Proteomes" id="UP000001009">
    <property type="component" value="Chromosome"/>
</dbReference>
<dbReference type="GO" id="GO:0005737">
    <property type="term" value="C:cytoplasm"/>
    <property type="evidence" value="ECO:0007669"/>
    <property type="project" value="UniProtKB-SubCell"/>
</dbReference>
<dbReference type="GO" id="GO:0003852">
    <property type="term" value="F:2-isopropylmalate synthase activity"/>
    <property type="evidence" value="ECO:0007669"/>
    <property type="project" value="UniProtKB-UniRule"/>
</dbReference>
<dbReference type="GO" id="GO:0003985">
    <property type="term" value="F:acetyl-CoA C-acetyltransferase activity"/>
    <property type="evidence" value="ECO:0007669"/>
    <property type="project" value="UniProtKB-UniRule"/>
</dbReference>
<dbReference type="GO" id="GO:0000287">
    <property type="term" value="F:magnesium ion binding"/>
    <property type="evidence" value="ECO:0007669"/>
    <property type="project" value="UniProtKB-UniRule"/>
</dbReference>
<dbReference type="GO" id="GO:0009098">
    <property type="term" value="P:L-leucine biosynthetic process"/>
    <property type="evidence" value="ECO:0007669"/>
    <property type="project" value="UniProtKB-UniRule"/>
</dbReference>
<dbReference type="CDD" id="cd07942">
    <property type="entry name" value="DRE_TIM_LeuA"/>
    <property type="match status" value="1"/>
</dbReference>
<dbReference type="FunFam" id="3.20.20.70:FF:000045">
    <property type="entry name" value="2-isopropylmalate synthase"/>
    <property type="match status" value="1"/>
</dbReference>
<dbReference type="Gene3D" id="3.30.160.270">
    <property type="match status" value="1"/>
</dbReference>
<dbReference type="Gene3D" id="3.20.20.70">
    <property type="entry name" value="Aldolase class I"/>
    <property type="match status" value="1"/>
</dbReference>
<dbReference type="HAMAP" id="MF_00572">
    <property type="entry name" value="LeuA_type2"/>
    <property type="match status" value="1"/>
</dbReference>
<dbReference type="InterPro" id="IPR013709">
    <property type="entry name" value="2-isopropylmalate_synth_dimer"/>
</dbReference>
<dbReference type="InterPro" id="IPR002034">
    <property type="entry name" value="AIPM/Hcit_synth_CS"/>
</dbReference>
<dbReference type="InterPro" id="IPR013785">
    <property type="entry name" value="Aldolase_TIM"/>
</dbReference>
<dbReference type="InterPro" id="IPR005668">
    <property type="entry name" value="IPM_Synthase"/>
</dbReference>
<dbReference type="InterPro" id="IPR054692">
    <property type="entry name" value="LeuA-like_post-cat"/>
</dbReference>
<dbReference type="InterPro" id="IPR036230">
    <property type="entry name" value="LeuA_allosteric_dom_sf"/>
</dbReference>
<dbReference type="InterPro" id="IPR039371">
    <property type="entry name" value="LeuA_N_DRE-TIM"/>
</dbReference>
<dbReference type="InterPro" id="IPR000891">
    <property type="entry name" value="PYR_CT"/>
</dbReference>
<dbReference type="NCBIfam" id="TIGR00970">
    <property type="entry name" value="leuA_yeast"/>
    <property type="match status" value="1"/>
</dbReference>
<dbReference type="NCBIfam" id="NF002991">
    <property type="entry name" value="PRK03739.1"/>
    <property type="match status" value="1"/>
</dbReference>
<dbReference type="PANTHER" id="PTHR46911">
    <property type="match status" value="1"/>
</dbReference>
<dbReference type="PANTHER" id="PTHR46911:SF1">
    <property type="entry name" value="2-ISOPROPYLMALATE SYNTHASE"/>
    <property type="match status" value="1"/>
</dbReference>
<dbReference type="Pfam" id="PF00682">
    <property type="entry name" value="HMGL-like"/>
    <property type="match status" value="1"/>
</dbReference>
<dbReference type="Pfam" id="PF22615">
    <property type="entry name" value="IPMS_D2"/>
    <property type="match status" value="1"/>
</dbReference>
<dbReference type="Pfam" id="PF08502">
    <property type="entry name" value="LeuA_dimer"/>
    <property type="match status" value="1"/>
</dbReference>
<dbReference type="SMART" id="SM00917">
    <property type="entry name" value="LeuA_dimer"/>
    <property type="match status" value="1"/>
</dbReference>
<dbReference type="SUPFAM" id="SSF110921">
    <property type="entry name" value="2-isopropylmalate synthase LeuA, allosteric (dimerisation) domain"/>
    <property type="match status" value="1"/>
</dbReference>
<dbReference type="SUPFAM" id="SSF51569">
    <property type="entry name" value="Aldolase"/>
    <property type="match status" value="1"/>
</dbReference>
<dbReference type="SUPFAM" id="SSF89000">
    <property type="entry name" value="post-HMGL domain-like"/>
    <property type="match status" value="1"/>
</dbReference>
<dbReference type="PROSITE" id="PS00815">
    <property type="entry name" value="AIPM_HOMOCIT_SYNTH_1"/>
    <property type="match status" value="1"/>
</dbReference>
<dbReference type="PROSITE" id="PS00816">
    <property type="entry name" value="AIPM_HOMOCIT_SYNTH_2"/>
    <property type="match status" value="1"/>
</dbReference>
<dbReference type="PROSITE" id="PS50991">
    <property type="entry name" value="PYR_CT"/>
    <property type="match status" value="1"/>
</dbReference>
<feature type="chain" id="PRO_0000140432" description="2-isopropylmalate synthase">
    <location>
        <begin position="1"/>
        <end position="616"/>
    </location>
</feature>
<feature type="domain" description="Pyruvate carboxyltransferase" evidence="1">
    <location>
        <begin position="67"/>
        <end position="341"/>
    </location>
</feature>
<feature type="region of interest" description="Disordered" evidence="2">
    <location>
        <begin position="1"/>
        <end position="34"/>
    </location>
</feature>
<feature type="region of interest" description="Regulatory domain" evidence="1">
    <location>
        <begin position="490"/>
        <end position="616"/>
    </location>
</feature>
<feature type="binding site" evidence="1">
    <location>
        <position position="76"/>
    </location>
    <ligand>
        <name>Mg(2+)</name>
        <dbReference type="ChEBI" id="CHEBI:18420"/>
    </ligand>
</feature>
<feature type="binding site" evidence="1">
    <location>
        <position position="280"/>
    </location>
    <ligand>
        <name>Mg(2+)</name>
        <dbReference type="ChEBI" id="CHEBI:18420"/>
    </ligand>
</feature>
<feature type="binding site" evidence="1">
    <location>
        <position position="282"/>
    </location>
    <ligand>
        <name>Mg(2+)</name>
        <dbReference type="ChEBI" id="CHEBI:18420"/>
    </ligand>
</feature>
<feature type="binding site" evidence="1">
    <location>
        <position position="316"/>
    </location>
    <ligand>
        <name>Mg(2+)</name>
        <dbReference type="ChEBI" id="CHEBI:18420"/>
    </ligand>
</feature>
<accession>P42455</accession>
<evidence type="ECO:0000255" key="1">
    <source>
        <dbReference type="HAMAP-Rule" id="MF_00572"/>
    </source>
</evidence>
<evidence type="ECO:0000256" key="2">
    <source>
        <dbReference type="SAM" id="MobiDB-lite"/>
    </source>
</evidence>
<evidence type="ECO:0000269" key="3">
    <source>
    </source>
</evidence>
<evidence type="ECO:0000303" key="4">
    <source>
    </source>
</evidence>
<evidence type="ECO:0000305" key="5"/>
<keyword id="KW-0028">Amino-acid biosynthesis</keyword>
<keyword id="KW-0100">Branched-chain amino acid biosynthesis</keyword>
<keyword id="KW-0963">Cytoplasm</keyword>
<keyword id="KW-0432">Leucine biosynthesis</keyword>
<keyword id="KW-0460">Magnesium</keyword>
<keyword id="KW-0479">Metal-binding</keyword>
<keyword id="KW-1185">Reference proteome</keyword>
<keyword id="KW-0808">Transferase</keyword>
<organism>
    <name type="scientific">Corynebacterium glutamicum (strain ATCC 13032 / DSM 20300 / JCM 1318 / BCRC 11384 / CCUG 27702 / LMG 3730 / NBRC 12168 / NCIMB 10025 / NRRL B-2784 / 534)</name>
    <dbReference type="NCBI Taxonomy" id="196627"/>
    <lineage>
        <taxon>Bacteria</taxon>
        <taxon>Bacillati</taxon>
        <taxon>Actinomycetota</taxon>
        <taxon>Actinomycetes</taxon>
        <taxon>Mycobacteriales</taxon>
        <taxon>Corynebacteriaceae</taxon>
        <taxon>Corynebacterium</taxon>
    </lineage>
</organism>
<proteinExistence type="evidence at protein level"/>
<protein>
    <recommendedName>
        <fullName evidence="1">2-isopropylmalate synthase</fullName>
        <ecNumber evidence="1">2.3.3.13</ecNumber>
    </recommendedName>
    <alternativeName>
        <fullName evidence="1">Alpha-IPM synthase</fullName>
    </alternativeName>
    <alternativeName>
        <fullName evidence="1">Alpha-isopropylmalate synthase</fullName>
    </alternativeName>
</protein>
<gene>
    <name evidence="1 4" type="primary">leuA</name>
    <name type="ordered locus">Cgl0248</name>
    <name type="ordered locus">cg0303</name>
</gene>
<comment type="function">
    <text evidence="1 3">Catalyzes the condensation of the acetyl group of acetyl-CoA with 3-methyl-2-oxobutanoate (2-ketoisovalerate) to form 3-carboxy-3-hydroxy-4-methylpentanoate (2-isopropylmalate). Complements an E.coli leuA deletion (PubMed:8117072).</text>
</comment>
<comment type="catalytic activity">
    <reaction evidence="1">
        <text>3-methyl-2-oxobutanoate + acetyl-CoA + H2O = (2S)-2-isopropylmalate + CoA + H(+)</text>
        <dbReference type="Rhea" id="RHEA:21524"/>
        <dbReference type="ChEBI" id="CHEBI:1178"/>
        <dbReference type="ChEBI" id="CHEBI:11851"/>
        <dbReference type="ChEBI" id="CHEBI:15377"/>
        <dbReference type="ChEBI" id="CHEBI:15378"/>
        <dbReference type="ChEBI" id="CHEBI:57287"/>
        <dbReference type="ChEBI" id="CHEBI:57288"/>
        <dbReference type="EC" id="2.3.3.13"/>
    </reaction>
</comment>
<comment type="cofactor">
    <cofactor evidence="1">
        <name>Mg(2+)</name>
        <dbReference type="ChEBI" id="CHEBI:18420"/>
    </cofactor>
</comment>
<comment type="activity regulation">
    <text evidence="3">Inhibited by L-leucine, the pathway end product.</text>
</comment>
<comment type="pathway">
    <text evidence="1 3">Amino-acid biosynthesis; L-leucine biosynthesis; L-leucine from 3-methyl-2-oxobutanoate: step 1/4.</text>
</comment>
<comment type="subunit">
    <text evidence="1 3">Homodimer.</text>
</comment>
<comment type="subcellular location">
    <subcellularLocation>
        <location evidence="1">Cytoplasm</location>
    </subcellularLocation>
</comment>
<comment type="disruption phenotype">
    <text evidence="3">Lacks 2-isopropylmalate synthase activity, no longer grows in the absence of leucine, increased lysine formation when the appropriate leucine concentration is supplied.</text>
</comment>
<comment type="miscellaneous">
    <text evidence="4">C.glutamicum strains classically bred for lysine production are leucine auxotrophs.</text>
</comment>
<comment type="similarity">
    <text evidence="1">Belongs to the alpha-IPM synthase/homocitrate synthase family. LeuA type 2 subfamily.</text>
</comment>
<comment type="sequence caution" evidence="5">
    <conflict type="erroneous initiation">
        <sequence resource="EMBL-CDS" id="CAA50295"/>
    </conflict>
    <text>Extended N-terminus.</text>
</comment>
<reference key="1">
    <citation type="journal article" date="1994" name="Appl. Environ. Microbiol.">
        <title>Leucine synthesis in Corynebacterium glutamicum: enzyme activities, structure of leuA, and effect of leuA inactivation on lysine synthesis.</title>
        <authorList>
            <person name="Patek M."/>
            <person name="Krumbach K."/>
            <person name="Eggeling L."/>
            <person name="Sahm H."/>
        </authorList>
    </citation>
    <scope>NUCLEOTIDE SEQUENCE [GENOMIC DNA]</scope>
    <scope>FUNCTION</scope>
    <scope>ACTIVITY REGULATION</scope>
    <scope>PATHWAY</scope>
    <scope>SUBUNIT</scope>
    <scope>DISRUPTION PHENOTYPE</scope>
    <source>
        <strain>ATCC 13032 / DSM 20300 / JCM 1318 / BCRC 11384 / CCUG 27702 / LMG 3730 / NBRC 12168 / NCIMB 10025 / NRRL B-2784 / 534</strain>
    </source>
</reference>
<reference key="2">
    <citation type="journal article" date="2003" name="Appl. Microbiol. Biotechnol.">
        <title>The Corynebacterium glutamicum genome: features and impacts on biotechnological processes.</title>
        <authorList>
            <person name="Ikeda M."/>
            <person name="Nakagawa S."/>
        </authorList>
    </citation>
    <scope>NUCLEOTIDE SEQUENCE [LARGE SCALE GENOMIC DNA]</scope>
    <source>
        <strain>ATCC 13032 / DSM 20300 / JCM 1318 / BCRC 11384 / CCUG 27702 / LMG 3730 / NBRC 12168 / NCIMB 10025 / NRRL B-2784 / 534</strain>
    </source>
</reference>
<reference key="3">
    <citation type="journal article" date="2003" name="J. Biotechnol.">
        <title>The complete Corynebacterium glutamicum ATCC 13032 genome sequence and its impact on the production of L-aspartate-derived amino acids and vitamins.</title>
        <authorList>
            <person name="Kalinowski J."/>
            <person name="Bathe B."/>
            <person name="Bartels D."/>
            <person name="Bischoff N."/>
            <person name="Bott M."/>
            <person name="Burkovski A."/>
            <person name="Dusch N."/>
            <person name="Eggeling L."/>
            <person name="Eikmanns B.J."/>
            <person name="Gaigalat L."/>
            <person name="Goesmann A."/>
            <person name="Hartmann M."/>
            <person name="Huthmacher K."/>
            <person name="Kraemer R."/>
            <person name="Linke B."/>
            <person name="McHardy A.C."/>
            <person name="Meyer F."/>
            <person name="Moeckel B."/>
            <person name="Pfefferle W."/>
            <person name="Puehler A."/>
            <person name="Rey D.A."/>
            <person name="Rueckert C."/>
            <person name="Rupp O."/>
            <person name="Sahm H."/>
            <person name="Wendisch V.F."/>
            <person name="Wiegraebe I."/>
            <person name="Tauch A."/>
        </authorList>
    </citation>
    <scope>NUCLEOTIDE SEQUENCE [LARGE SCALE GENOMIC DNA]</scope>
    <source>
        <strain>ATCC 13032 / DSM 20300 / JCM 1318 / BCRC 11384 / CCUG 27702 / LMG 3730 / NBRC 12168 / NCIMB 10025 / NRRL B-2784 / 534</strain>
    </source>
</reference>